<sequence>KEGYGVGKDGCKISCVIGNEFCNKECKYSQKGTGGYCWTWGLACWCQGLPENAKVWESSTNTC</sequence>
<evidence type="ECO:0000250" key="1"/>
<evidence type="ECO:0000255" key="2">
    <source>
        <dbReference type="PROSITE-ProRule" id="PRU01210"/>
    </source>
</evidence>
<evidence type="ECO:0000269" key="3">
    <source>
    </source>
</evidence>
<evidence type="ECO:0000305" key="4"/>
<evidence type="ECO:0000305" key="5">
    <source>
    </source>
</evidence>
<keyword id="KW-0903">Direct protein sequencing</keyword>
<keyword id="KW-1015">Disulfide bond</keyword>
<keyword id="KW-0872">Ion channel impairing toxin</keyword>
<keyword id="KW-0528">Neurotoxin</keyword>
<keyword id="KW-0964">Secreted</keyword>
<keyword id="KW-0800">Toxin</keyword>
<keyword id="KW-0738">Voltage-gated sodium channel impairing toxin</keyword>
<name>SIX3_ISOMC</name>
<organism>
    <name type="scientific">Isometrus maculatus</name>
    <name type="common">Lesser brown scorpion</name>
    <name type="synonym">Scorpio maculatus</name>
    <dbReference type="NCBI Taxonomy" id="497827"/>
    <lineage>
        <taxon>Eukaryota</taxon>
        <taxon>Metazoa</taxon>
        <taxon>Ecdysozoa</taxon>
        <taxon>Arthropoda</taxon>
        <taxon>Chelicerata</taxon>
        <taxon>Arachnida</taxon>
        <taxon>Scorpiones</taxon>
        <taxon>Buthida</taxon>
        <taxon>Buthoidea</taxon>
        <taxon>Buthidae</taxon>
        <taxon>Isometrus</taxon>
    </lineage>
</organism>
<comment type="function">
    <text evidence="1 3">Beta toxins bind voltage-independently at site-4 of sodium channels (Nav) and shift the voltage of activation toward more negative potentials thereby affecting sodium channel activation and promoting spontaneous and repetitive firing (By similarity). Induces paralysis in cricket A.domestica but does not induce death.</text>
</comment>
<comment type="subcellular location">
    <subcellularLocation>
        <location>Secreted</location>
    </subcellularLocation>
</comment>
<comment type="tissue specificity">
    <text>Expressed by the venom gland.</text>
</comment>
<comment type="domain">
    <text evidence="4">Has the structural arrangement of an alpha-helix connected to antiparallel beta-sheets by disulfide bonds (CS-alpha/beta).</text>
</comment>
<comment type="mass spectrometry">
    <text>Monoisotopic mass.</text>
</comment>
<comment type="miscellaneous">
    <text evidence="5">Negative results: does not induce toxicity when intracerebroventricularly injected into mice.</text>
</comment>
<comment type="similarity">
    <text evidence="4">Belongs to the long (4 C-C) scorpion toxin superfamily. Sodium channel inhibitor family. Beta subfamily.</text>
</comment>
<protein>
    <recommendedName>
        <fullName>Beta-insect depressant toxin Im-3</fullName>
    </recommendedName>
</protein>
<feature type="chain" id="PRO_0000422068" description="Beta-insect depressant toxin Im-3">
    <location>
        <begin position="1"/>
        <end position="63"/>
    </location>
</feature>
<feature type="domain" description="LCN-type CS-alpha/beta" evidence="2">
    <location>
        <begin position="1"/>
        <end position="63"/>
    </location>
</feature>
<feature type="disulfide bond" evidence="2">
    <location>
        <begin position="11"/>
        <end position="63"/>
    </location>
</feature>
<feature type="disulfide bond" evidence="2">
    <location>
        <begin position="15"/>
        <end position="37"/>
    </location>
</feature>
<feature type="disulfide bond" evidence="2">
    <location>
        <begin position="22"/>
        <end position="44"/>
    </location>
</feature>
<feature type="disulfide bond" evidence="2">
    <location>
        <begin position="26"/>
        <end position="46"/>
    </location>
</feature>
<dbReference type="SMR" id="P0DJK9"/>
<dbReference type="GO" id="GO:0005576">
    <property type="term" value="C:extracellular region"/>
    <property type="evidence" value="ECO:0007669"/>
    <property type="project" value="UniProtKB-SubCell"/>
</dbReference>
<dbReference type="GO" id="GO:0019871">
    <property type="term" value="F:sodium channel inhibitor activity"/>
    <property type="evidence" value="ECO:0007669"/>
    <property type="project" value="InterPro"/>
</dbReference>
<dbReference type="GO" id="GO:0090729">
    <property type="term" value="F:toxin activity"/>
    <property type="evidence" value="ECO:0007669"/>
    <property type="project" value="UniProtKB-KW"/>
</dbReference>
<dbReference type="GO" id="GO:0006952">
    <property type="term" value="P:defense response"/>
    <property type="evidence" value="ECO:0007669"/>
    <property type="project" value="InterPro"/>
</dbReference>
<dbReference type="CDD" id="cd23106">
    <property type="entry name" value="neurotoxins_LC_scorpion"/>
    <property type="match status" value="1"/>
</dbReference>
<dbReference type="FunFam" id="3.30.30.10:FF:000002">
    <property type="entry name" value="Alpha-like toxin BmK-M1"/>
    <property type="match status" value="1"/>
</dbReference>
<dbReference type="Gene3D" id="3.30.30.10">
    <property type="entry name" value="Knottin, scorpion toxin-like"/>
    <property type="match status" value="1"/>
</dbReference>
<dbReference type="InterPro" id="IPR044062">
    <property type="entry name" value="LCN-type_CS_alpha_beta_dom"/>
</dbReference>
<dbReference type="InterPro" id="IPR003614">
    <property type="entry name" value="Scorpion_toxin-like"/>
</dbReference>
<dbReference type="InterPro" id="IPR036574">
    <property type="entry name" value="Scorpion_toxin-like_sf"/>
</dbReference>
<dbReference type="InterPro" id="IPR018218">
    <property type="entry name" value="Scorpion_toxinL"/>
</dbReference>
<dbReference type="InterPro" id="IPR002061">
    <property type="entry name" value="Scorpion_toxinL/defensin"/>
</dbReference>
<dbReference type="Pfam" id="PF00537">
    <property type="entry name" value="Toxin_3"/>
    <property type="match status" value="1"/>
</dbReference>
<dbReference type="PRINTS" id="PR00285">
    <property type="entry name" value="SCORPNTOXIN"/>
</dbReference>
<dbReference type="SMART" id="SM00505">
    <property type="entry name" value="Knot1"/>
    <property type="match status" value="1"/>
</dbReference>
<dbReference type="SUPFAM" id="SSF57095">
    <property type="entry name" value="Scorpion toxin-like"/>
    <property type="match status" value="1"/>
</dbReference>
<dbReference type="PROSITE" id="PS51863">
    <property type="entry name" value="LCN_CSAB"/>
    <property type="match status" value="1"/>
</dbReference>
<accession>P0DJK9</accession>
<reference key="1">
    <citation type="journal article" date="2013" name="Biosci. Biotechnol. Biochem.">
        <title>Isolation and characterization of an anti-insect beta-toxin from the venom of the scorpion Isometrus maculatus.</title>
        <authorList>
            <person name="Kawachi T."/>
            <person name="Miyashita M."/>
            <person name="Nakagawa Y."/>
            <person name="Miyagawa H."/>
        </authorList>
    </citation>
    <scope>PROTEIN SEQUENCE</scope>
    <scope>FUNCTION</scope>
    <scope>BIOASSAY</scope>
    <scope>MASS SPECTROMETRY</scope>
    <source>
        <strain>Ishigaki Island</strain>
        <tissue>Venom</tissue>
    </source>
</reference>
<proteinExistence type="evidence at protein level"/>